<evidence type="ECO:0000255" key="1">
    <source>
        <dbReference type="HAMAP-Rule" id="MF_01570"/>
    </source>
</evidence>
<feature type="chain" id="PRO_0000248901" description="Proline--tRNA ligase">
    <location>
        <begin position="1"/>
        <end position="438"/>
    </location>
</feature>
<protein>
    <recommendedName>
        <fullName evidence="1">Proline--tRNA ligase</fullName>
        <ecNumber evidence="1">6.1.1.15</ecNumber>
    </recommendedName>
    <alternativeName>
        <fullName evidence="1">Prolyl-tRNA synthetase</fullName>
        <shortName evidence="1">ProRS</shortName>
    </alternativeName>
</protein>
<gene>
    <name evidence="1" type="primary">proS</name>
    <name type="ordered locus">GOX0079</name>
</gene>
<name>SYP_GLUOX</name>
<reference key="1">
    <citation type="journal article" date="2005" name="Nat. Biotechnol.">
        <title>Complete genome sequence of the acetic acid bacterium Gluconobacter oxydans.</title>
        <authorList>
            <person name="Prust C."/>
            <person name="Hoffmeister M."/>
            <person name="Liesegang H."/>
            <person name="Wiezer A."/>
            <person name="Fricke W.F."/>
            <person name="Ehrenreich A."/>
            <person name="Gottschalk G."/>
            <person name="Deppenmeier U."/>
        </authorList>
    </citation>
    <scope>NUCLEOTIDE SEQUENCE [LARGE SCALE GENOMIC DNA]</scope>
    <source>
        <strain>621H</strain>
    </source>
</reference>
<proteinExistence type="inferred from homology"/>
<organism>
    <name type="scientific">Gluconobacter oxydans (strain 621H)</name>
    <name type="common">Gluconobacter suboxydans</name>
    <dbReference type="NCBI Taxonomy" id="290633"/>
    <lineage>
        <taxon>Bacteria</taxon>
        <taxon>Pseudomonadati</taxon>
        <taxon>Pseudomonadota</taxon>
        <taxon>Alphaproteobacteria</taxon>
        <taxon>Acetobacterales</taxon>
        <taxon>Acetobacteraceae</taxon>
        <taxon>Gluconobacter</taxon>
    </lineage>
</organism>
<comment type="function">
    <text evidence="1">Catalyzes the attachment of proline to tRNA(Pro) in a two-step reaction: proline is first activated by ATP to form Pro-AMP and then transferred to the acceptor end of tRNA(Pro).</text>
</comment>
<comment type="catalytic activity">
    <reaction evidence="1">
        <text>tRNA(Pro) + L-proline + ATP = L-prolyl-tRNA(Pro) + AMP + diphosphate</text>
        <dbReference type="Rhea" id="RHEA:14305"/>
        <dbReference type="Rhea" id="RHEA-COMP:9700"/>
        <dbReference type="Rhea" id="RHEA-COMP:9702"/>
        <dbReference type="ChEBI" id="CHEBI:30616"/>
        <dbReference type="ChEBI" id="CHEBI:33019"/>
        <dbReference type="ChEBI" id="CHEBI:60039"/>
        <dbReference type="ChEBI" id="CHEBI:78442"/>
        <dbReference type="ChEBI" id="CHEBI:78532"/>
        <dbReference type="ChEBI" id="CHEBI:456215"/>
        <dbReference type="EC" id="6.1.1.15"/>
    </reaction>
</comment>
<comment type="subunit">
    <text evidence="1">Homodimer.</text>
</comment>
<comment type="subcellular location">
    <subcellularLocation>
        <location evidence="1">Cytoplasm</location>
    </subcellularLocation>
</comment>
<comment type="similarity">
    <text evidence="1">Belongs to the class-II aminoacyl-tRNA synthetase family. ProS type 2 subfamily.</text>
</comment>
<accession>Q5FUU9</accession>
<dbReference type="EC" id="6.1.1.15" evidence="1"/>
<dbReference type="EMBL" id="CP000009">
    <property type="protein sequence ID" value="AAW59876.1"/>
    <property type="molecule type" value="Genomic_DNA"/>
</dbReference>
<dbReference type="RefSeq" id="WP_011251680.1">
    <property type="nucleotide sequence ID" value="NC_006677.1"/>
</dbReference>
<dbReference type="SMR" id="Q5FUU9"/>
<dbReference type="STRING" id="290633.GOX0079"/>
<dbReference type="KEGG" id="gox:GOX0079"/>
<dbReference type="eggNOG" id="COG0442">
    <property type="taxonomic scope" value="Bacteria"/>
</dbReference>
<dbReference type="HOGENOM" id="CLU_016739_4_2_5"/>
<dbReference type="Proteomes" id="UP000006375">
    <property type="component" value="Chromosome"/>
</dbReference>
<dbReference type="GO" id="GO:0005829">
    <property type="term" value="C:cytosol"/>
    <property type="evidence" value="ECO:0007669"/>
    <property type="project" value="TreeGrafter"/>
</dbReference>
<dbReference type="GO" id="GO:0005524">
    <property type="term" value="F:ATP binding"/>
    <property type="evidence" value="ECO:0007669"/>
    <property type="project" value="UniProtKB-UniRule"/>
</dbReference>
<dbReference type="GO" id="GO:0004827">
    <property type="term" value="F:proline-tRNA ligase activity"/>
    <property type="evidence" value="ECO:0007669"/>
    <property type="project" value="UniProtKB-UniRule"/>
</dbReference>
<dbReference type="GO" id="GO:0006433">
    <property type="term" value="P:prolyl-tRNA aminoacylation"/>
    <property type="evidence" value="ECO:0007669"/>
    <property type="project" value="UniProtKB-UniRule"/>
</dbReference>
<dbReference type="CDD" id="cd00861">
    <property type="entry name" value="ProRS_anticodon_short"/>
    <property type="match status" value="1"/>
</dbReference>
<dbReference type="CDD" id="cd00779">
    <property type="entry name" value="ProRS_core_prok"/>
    <property type="match status" value="1"/>
</dbReference>
<dbReference type="FunFam" id="3.30.930.10:FF:000042">
    <property type="entry name" value="probable proline--tRNA ligase, mitochondrial"/>
    <property type="match status" value="1"/>
</dbReference>
<dbReference type="FunFam" id="3.40.50.800:FF:000032">
    <property type="entry name" value="Proline--tRNA ligase"/>
    <property type="match status" value="1"/>
</dbReference>
<dbReference type="Gene3D" id="3.40.50.800">
    <property type="entry name" value="Anticodon-binding domain"/>
    <property type="match status" value="1"/>
</dbReference>
<dbReference type="Gene3D" id="3.30.930.10">
    <property type="entry name" value="Bira Bifunctional Protein, Domain 2"/>
    <property type="match status" value="1"/>
</dbReference>
<dbReference type="HAMAP" id="MF_01570">
    <property type="entry name" value="Pro_tRNA_synth_type2"/>
    <property type="match status" value="1"/>
</dbReference>
<dbReference type="InterPro" id="IPR002314">
    <property type="entry name" value="aa-tRNA-synt_IIb"/>
</dbReference>
<dbReference type="InterPro" id="IPR006195">
    <property type="entry name" value="aa-tRNA-synth_II"/>
</dbReference>
<dbReference type="InterPro" id="IPR045864">
    <property type="entry name" value="aa-tRNA-synth_II/BPL/LPL"/>
</dbReference>
<dbReference type="InterPro" id="IPR004154">
    <property type="entry name" value="Anticodon-bd"/>
</dbReference>
<dbReference type="InterPro" id="IPR036621">
    <property type="entry name" value="Anticodon-bd_dom_sf"/>
</dbReference>
<dbReference type="InterPro" id="IPR002316">
    <property type="entry name" value="Pro-tRNA-ligase_IIa"/>
</dbReference>
<dbReference type="InterPro" id="IPR004500">
    <property type="entry name" value="Pro-tRNA-synth_IIa_bac-type"/>
</dbReference>
<dbReference type="InterPro" id="IPR050062">
    <property type="entry name" value="Pro-tRNA_synthetase"/>
</dbReference>
<dbReference type="InterPro" id="IPR023716">
    <property type="entry name" value="Prolyl-tRNA_ligase_IIa_type2"/>
</dbReference>
<dbReference type="InterPro" id="IPR044140">
    <property type="entry name" value="ProRS_anticodon_short"/>
</dbReference>
<dbReference type="InterPro" id="IPR033730">
    <property type="entry name" value="ProRS_core_prok"/>
</dbReference>
<dbReference type="NCBIfam" id="NF008979">
    <property type="entry name" value="PRK12325.1"/>
    <property type="match status" value="1"/>
</dbReference>
<dbReference type="NCBIfam" id="TIGR00409">
    <property type="entry name" value="proS_fam_II"/>
    <property type="match status" value="1"/>
</dbReference>
<dbReference type="PANTHER" id="PTHR42753">
    <property type="entry name" value="MITOCHONDRIAL RIBOSOME PROTEIN L39/PROLYL-TRNA LIGASE FAMILY MEMBER"/>
    <property type="match status" value="1"/>
</dbReference>
<dbReference type="PANTHER" id="PTHR42753:SF2">
    <property type="entry name" value="PROLINE--TRNA LIGASE"/>
    <property type="match status" value="1"/>
</dbReference>
<dbReference type="Pfam" id="PF03129">
    <property type="entry name" value="HGTP_anticodon"/>
    <property type="match status" value="1"/>
</dbReference>
<dbReference type="Pfam" id="PF00587">
    <property type="entry name" value="tRNA-synt_2b"/>
    <property type="match status" value="1"/>
</dbReference>
<dbReference type="PRINTS" id="PR01046">
    <property type="entry name" value="TRNASYNTHPRO"/>
</dbReference>
<dbReference type="SUPFAM" id="SSF52954">
    <property type="entry name" value="Class II aaRS ABD-related"/>
    <property type="match status" value="1"/>
</dbReference>
<dbReference type="SUPFAM" id="SSF55681">
    <property type="entry name" value="Class II aaRS and biotin synthetases"/>
    <property type="match status" value="1"/>
</dbReference>
<dbReference type="PROSITE" id="PS50862">
    <property type="entry name" value="AA_TRNA_LIGASE_II"/>
    <property type="match status" value="1"/>
</dbReference>
<keyword id="KW-0030">Aminoacyl-tRNA synthetase</keyword>
<keyword id="KW-0067">ATP-binding</keyword>
<keyword id="KW-0963">Cytoplasm</keyword>
<keyword id="KW-0436">Ligase</keyword>
<keyword id="KW-0547">Nucleotide-binding</keyword>
<keyword id="KW-0648">Protein biosynthesis</keyword>
<keyword id="KW-1185">Reference proteome</keyword>
<sequence>MRLTKAFQPTLKEVPAEAQIASHRLMLRAGLVRQTASGIYAWLPAGLRVLRNIEQIIREEQDAIGAQEVLMPTLQSAELWRRSGRYDAYGPEMLRIQDRHGRDLLYGPTNEEMITDIFGSSVKSYKELPKALYHIQWKFRDEVRPRFGVMRGREFLMKDAYSFDASYEGAVASYRRMMLSYLRIFQRLGVRAVPMVADTGPIGGDLSHEFLVLAPTGESAVFFDAALEEQDWLSRPVDCDDAESLATFFATVTDHYAATDEKHDEAEWAKVPAERKREGRGIEVGHIFYFGTKYTASMGIEVSGPDGAPFHPHMGSYGVGVSRLVGAIIEASHDDAGIIWPASVAPYRAAILNLRQDDEACDAICDRIYGTDPENLLYDDRSERAGVKFNDADLMGHPWQIIVGPRGAKEGKVELKQRATGERFELSVEDALAKIGAA</sequence>